<organism>
    <name type="scientific">Drosophila grimshawi</name>
    <name type="common">Hawaiian fruit fly</name>
    <name type="synonym">Idiomyia grimshawi</name>
    <dbReference type="NCBI Taxonomy" id="7222"/>
    <lineage>
        <taxon>Eukaryota</taxon>
        <taxon>Metazoa</taxon>
        <taxon>Ecdysozoa</taxon>
        <taxon>Arthropoda</taxon>
        <taxon>Hexapoda</taxon>
        <taxon>Insecta</taxon>
        <taxon>Pterygota</taxon>
        <taxon>Neoptera</taxon>
        <taxon>Endopterygota</taxon>
        <taxon>Diptera</taxon>
        <taxon>Brachycera</taxon>
        <taxon>Muscomorpha</taxon>
        <taxon>Ephydroidea</taxon>
        <taxon>Drosophilidae</taxon>
        <taxon>Drosophila</taxon>
        <taxon>Hawaiian Drosophila</taxon>
    </lineage>
</organism>
<comment type="subcellular location">
    <subcellularLocation>
        <location evidence="1">Cytoplasm</location>
    </subcellularLocation>
    <subcellularLocation>
        <location evidence="1">Nucleus</location>
    </subcellularLocation>
    <subcellularLocation>
        <location evidence="1">Cell projection</location>
        <location evidence="1">Cilium membrane</location>
        <topology evidence="1">Peripheral membrane protein</topology>
    </subcellularLocation>
    <subcellularLocation>
        <location evidence="1">Cell projection</location>
        <location evidence="1">Rhabdomere</location>
    </subcellularLocation>
</comment>
<comment type="similarity">
    <text evidence="2">Belongs to the TUB family.</text>
</comment>
<feature type="chain" id="PRO_0000400837" description="Protein king tubby">
    <location>
        <begin position="1"/>
        <end position="447"/>
    </location>
</feature>
<feature type="region of interest" description="Disordered" evidence="3">
    <location>
        <begin position="54"/>
        <end position="84"/>
    </location>
</feature>
<feature type="region of interest" description="Disordered" evidence="3">
    <location>
        <begin position="168"/>
        <end position="191"/>
    </location>
</feature>
<feature type="compositionally biased region" description="Low complexity" evidence="3">
    <location>
        <begin position="62"/>
        <end position="84"/>
    </location>
</feature>
<feature type="compositionally biased region" description="Low complexity" evidence="3">
    <location>
        <begin position="168"/>
        <end position="182"/>
    </location>
</feature>
<feature type="modified residue" description="Phosphoserine" evidence="1">
    <location>
        <position position="136"/>
    </location>
</feature>
<sequence length="447" mass="49539">MLILRQLMDAYIRQKRASPGMVQASDLQMNRPMSGMRSNSRELHAYDGPMQFIGSPQNPDQILSNNSSSITMNSSRNNSNNMRSLSTINQEDLIEEISSHELEDEESSPVTVVEQPIAPQSANSAHSQRARIGQPSFNDTLDEEDYANRNISGVAAVRPAGIGSPYKEGAAMEGSNGAANGSGSVGGSGESEGDVIGQIDQFVMQPAPQGVLYKCRITRDRKGMDRGLFPIYYLHLERDYGKKIFLLGGRKRKKSKTSNYIVSCDPTDLSRNADGFCGKLRSNVFGTSFTVFDSGNKESTDSPRLDLAVIIYDTNILGFKGPRNMTVILPGMTEDDQRVKISSADPKQQGILDLWKMKNMDNIVELHNKTPVWNDETQSYVLNFHGRVTQASVKNFQLVHDSDPEYIVMQFGRTSEDVFTMDYRYPLCAMQAFAIALSSFDGKIACE</sequence>
<gene>
    <name evidence="1" type="primary">king-tubby</name>
    <name type="ORF">GH20719</name>
</gene>
<name>TULP_DROGR</name>
<evidence type="ECO:0000250" key="1">
    <source>
        <dbReference type="UniProtKB" id="Q86PC9"/>
    </source>
</evidence>
<evidence type="ECO:0000255" key="2"/>
<evidence type="ECO:0000256" key="3">
    <source>
        <dbReference type="SAM" id="MobiDB-lite"/>
    </source>
</evidence>
<evidence type="ECO:0000312" key="4">
    <source>
        <dbReference type="EMBL" id="EDW00970.1"/>
    </source>
</evidence>
<protein>
    <recommendedName>
        <fullName evidence="1">Protein king tubby</fullName>
    </recommendedName>
</protein>
<proteinExistence type="inferred from homology"/>
<reference evidence="4" key="1">
    <citation type="journal article" date="2007" name="Nature">
        <title>Evolution of genes and genomes on the Drosophila phylogeny.</title>
        <authorList>
            <consortium name="Drosophila 12 genomes consortium"/>
        </authorList>
    </citation>
    <scope>NUCLEOTIDE SEQUENCE [LARGE SCALE GENOMIC DNA]</scope>
    <source>
        <strain evidence="4">Tucson 15287-2541.00</strain>
    </source>
</reference>
<keyword id="KW-1003">Cell membrane</keyword>
<keyword id="KW-0966">Cell projection</keyword>
<keyword id="KW-0963">Cytoplasm</keyword>
<keyword id="KW-0472">Membrane</keyword>
<keyword id="KW-0539">Nucleus</keyword>
<keyword id="KW-0597">Phosphoprotein</keyword>
<keyword id="KW-1185">Reference proteome</keyword>
<accession>B4J6R7</accession>
<dbReference type="EMBL" id="CH916367">
    <property type="protein sequence ID" value="EDW00970.1"/>
    <property type="molecule type" value="Genomic_DNA"/>
</dbReference>
<dbReference type="RefSeq" id="XP_001986103.1">
    <property type="nucleotide sequence ID" value="XM_001986067.1"/>
</dbReference>
<dbReference type="SMR" id="B4J6R7"/>
<dbReference type="FunCoup" id="B4J6R7">
    <property type="interactions" value="197"/>
</dbReference>
<dbReference type="STRING" id="7222.B4J6R7"/>
<dbReference type="EnsemblMetazoa" id="FBtr0471657">
    <property type="protein sequence ID" value="FBpp0421691"/>
    <property type="gene ID" value="FBgn0128182"/>
</dbReference>
<dbReference type="EnsemblMetazoa" id="XM_032735532.2">
    <property type="protein sequence ID" value="XP_032591423.1"/>
    <property type="gene ID" value="LOC6559286"/>
</dbReference>
<dbReference type="eggNOG" id="KOG2502">
    <property type="taxonomic scope" value="Eukaryota"/>
</dbReference>
<dbReference type="HOGENOM" id="CLU_028236_1_1_1"/>
<dbReference type="InParanoid" id="B4J6R7"/>
<dbReference type="OMA" id="GYDGPMQ"/>
<dbReference type="OrthoDB" id="8775810at2759"/>
<dbReference type="PhylomeDB" id="B4J6R7"/>
<dbReference type="ChiTaRS" id="ktub">
    <property type="organism name" value="fly"/>
</dbReference>
<dbReference type="Proteomes" id="UP000001070">
    <property type="component" value="Unassembled WGS sequence"/>
</dbReference>
<dbReference type="GO" id="GO:0060170">
    <property type="term" value="C:ciliary membrane"/>
    <property type="evidence" value="ECO:0007669"/>
    <property type="project" value="UniProtKB-SubCell"/>
</dbReference>
<dbReference type="GO" id="GO:0005737">
    <property type="term" value="C:cytoplasm"/>
    <property type="evidence" value="ECO:0000250"/>
    <property type="project" value="UniProtKB"/>
</dbReference>
<dbReference type="GO" id="GO:0005634">
    <property type="term" value="C:nucleus"/>
    <property type="evidence" value="ECO:0000250"/>
    <property type="project" value="UniProtKB"/>
</dbReference>
<dbReference type="GO" id="GO:0016028">
    <property type="term" value="C:rhabdomere"/>
    <property type="evidence" value="ECO:0007669"/>
    <property type="project" value="UniProtKB-SubCell"/>
</dbReference>
<dbReference type="GO" id="GO:0061512">
    <property type="term" value="P:protein localization to cilium"/>
    <property type="evidence" value="ECO:0007669"/>
    <property type="project" value="TreeGrafter"/>
</dbReference>
<dbReference type="FunFam" id="3.20.90.10:FF:000001">
    <property type="entry name" value="Tubby-like protein"/>
    <property type="match status" value="1"/>
</dbReference>
<dbReference type="Gene3D" id="3.20.90.10">
    <property type="entry name" value="Tubby Protein, Chain A"/>
    <property type="match status" value="1"/>
</dbReference>
<dbReference type="InterPro" id="IPR025659">
    <property type="entry name" value="Tubby-like_C"/>
</dbReference>
<dbReference type="InterPro" id="IPR000007">
    <property type="entry name" value="Tubby_C"/>
</dbReference>
<dbReference type="InterPro" id="IPR018066">
    <property type="entry name" value="Tubby_C_CS"/>
</dbReference>
<dbReference type="PANTHER" id="PTHR16517:SF7">
    <property type="entry name" value="PROTEIN KING TUBBY"/>
    <property type="match status" value="1"/>
</dbReference>
<dbReference type="PANTHER" id="PTHR16517">
    <property type="entry name" value="TUBBY-RELATED"/>
    <property type="match status" value="1"/>
</dbReference>
<dbReference type="Pfam" id="PF01167">
    <property type="entry name" value="Tub"/>
    <property type="match status" value="1"/>
</dbReference>
<dbReference type="PRINTS" id="PR01573">
    <property type="entry name" value="SUPERTUBBY"/>
</dbReference>
<dbReference type="SUPFAM" id="SSF54518">
    <property type="entry name" value="Tubby C-terminal domain-like"/>
    <property type="match status" value="1"/>
</dbReference>
<dbReference type="PROSITE" id="PS01200">
    <property type="entry name" value="TUB_1"/>
    <property type="match status" value="1"/>
</dbReference>
<dbReference type="PROSITE" id="PS01201">
    <property type="entry name" value="TUB_2"/>
    <property type="match status" value="1"/>
</dbReference>